<accession>Q8ZRU3</accession>
<sequence>MSGQPKRLMVMAGGTGGHVFPGLAVAHHLMAQGWQVRWLGTADRMEADLVPKHGIDIDFIRISGLRGKGVKALLAAPLRIFNAWRQARAIMKRFKPDVVLGMGGYVSGPGGLAAWSLGIPVVLHEQNGIAGLTNQWLAKIATTVMQAFPGAFPNAEVVGNPVRTDVLALPLPQVRLAGRDGPIRVLVVGGSQGARVLNQTMPQVAARLGDTVTIWHQSGKGAQLTVEQAYAGAGQPQHKVTEFIDDMAAAYAWADVVVCRSGALTVSEIAAAGLPAIFVPFQHKDRQQYWNALPLENAGAAKIFEQPQFTVEAVADTLAGWSREALLTMAERARAVSIPDATERVASEVSRVART</sequence>
<comment type="function">
    <text evidence="2">Cell wall formation. Catalyzes the transfer of a GlcNAc subunit on undecaprenyl-pyrophosphoryl-MurNAc-pentapeptide (lipid intermediate I) to form undecaprenyl-pyrophosphoryl-MurNAc-(pentapeptide)GlcNAc (lipid intermediate II).</text>
</comment>
<comment type="catalytic activity">
    <reaction evidence="2">
        <text>di-trans,octa-cis-undecaprenyl diphospho-N-acetyl-alpha-D-muramoyl-L-alanyl-D-glutamyl-meso-2,6-diaminopimeloyl-D-alanyl-D-alanine + UDP-N-acetyl-alpha-D-glucosamine = di-trans,octa-cis-undecaprenyl diphospho-[N-acetyl-alpha-D-glucosaminyl-(1-&gt;4)]-N-acetyl-alpha-D-muramoyl-L-alanyl-D-glutamyl-meso-2,6-diaminopimeloyl-D-alanyl-D-alanine + UDP + H(+)</text>
        <dbReference type="Rhea" id="RHEA:31227"/>
        <dbReference type="ChEBI" id="CHEBI:15378"/>
        <dbReference type="ChEBI" id="CHEBI:57705"/>
        <dbReference type="ChEBI" id="CHEBI:58223"/>
        <dbReference type="ChEBI" id="CHEBI:61387"/>
        <dbReference type="ChEBI" id="CHEBI:61388"/>
        <dbReference type="EC" id="2.4.1.227"/>
    </reaction>
</comment>
<comment type="pathway">
    <text evidence="2">Cell wall biogenesis; peptidoglycan biosynthesis.</text>
</comment>
<comment type="subcellular location">
    <subcellularLocation>
        <location evidence="2">Cell inner membrane</location>
        <topology evidence="2">Peripheral membrane protein</topology>
        <orientation evidence="2">Cytoplasmic side</orientation>
    </subcellularLocation>
</comment>
<comment type="similarity">
    <text evidence="2">Belongs to the glycosyltransferase 28 family. MurG subfamily.</text>
</comment>
<feature type="initiator methionine" description="Removed" evidence="1">
    <location>
        <position position="1"/>
    </location>
</feature>
<feature type="chain" id="PRO_0000109206" description="UDP-N-acetylglucosamine--N-acetylmuramyl-(pentapeptide) pyrophosphoryl-undecaprenol N-acetylglucosamine transferase">
    <location>
        <begin position="2"/>
        <end position="355"/>
    </location>
</feature>
<feature type="binding site" evidence="2">
    <location>
        <begin position="15"/>
        <end position="17"/>
    </location>
    <ligand>
        <name>UDP-N-acetyl-alpha-D-glucosamine</name>
        <dbReference type="ChEBI" id="CHEBI:57705"/>
    </ligand>
</feature>
<feature type="binding site" evidence="2">
    <location>
        <position position="127"/>
    </location>
    <ligand>
        <name>UDP-N-acetyl-alpha-D-glucosamine</name>
        <dbReference type="ChEBI" id="CHEBI:57705"/>
    </ligand>
</feature>
<feature type="binding site" evidence="2">
    <location>
        <position position="163"/>
    </location>
    <ligand>
        <name>UDP-N-acetyl-alpha-D-glucosamine</name>
        <dbReference type="ChEBI" id="CHEBI:57705"/>
    </ligand>
</feature>
<feature type="binding site" evidence="2">
    <location>
        <position position="191"/>
    </location>
    <ligand>
        <name>UDP-N-acetyl-alpha-D-glucosamine</name>
        <dbReference type="ChEBI" id="CHEBI:57705"/>
    </ligand>
</feature>
<feature type="binding site" evidence="2">
    <location>
        <position position="244"/>
    </location>
    <ligand>
        <name>UDP-N-acetyl-alpha-D-glucosamine</name>
        <dbReference type="ChEBI" id="CHEBI:57705"/>
    </ligand>
</feature>
<feature type="binding site" evidence="2">
    <location>
        <begin position="263"/>
        <end position="268"/>
    </location>
    <ligand>
        <name>UDP-N-acetyl-alpha-D-glucosamine</name>
        <dbReference type="ChEBI" id="CHEBI:57705"/>
    </ligand>
</feature>
<feature type="binding site" evidence="2">
    <location>
        <position position="288"/>
    </location>
    <ligand>
        <name>UDP-N-acetyl-alpha-D-glucosamine</name>
        <dbReference type="ChEBI" id="CHEBI:57705"/>
    </ligand>
</feature>
<dbReference type="EC" id="2.4.1.227" evidence="2"/>
<dbReference type="EMBL" id="AE006468">
    <property type="protein sequence ID" value="AAL19092.1"/>
    <property type="molecule type" value="Genomic_DNA"/>
</dbReference>
<dbReference type="RefSeq" id="NP_459133.1">
    <property type="nucleotide sequence ID" value="NC_003197.2"/>
</dbReference>
<dbReference type="RefSeq" id="WP_000016613.1">
    <property type="nucleotide sequence ID" value="NC_003197.2"/>
</dbReference>
<dbReference type="SMR" id="Q8ZRU3"/>
<dbReference type="STRING" id="99287.STM0128"/>
<dbReference type="CAZy" id="GT28">
    <property type="family name" value="Glycosyltransferase Family 28"/>
</dbReference>
<dbReference type="PaxDb" id="99287-STM0128"/>
<dbReference type="GeneID" id="1251646"/>
<dbReference type="KEGG" id="stm:STM0128"/>
<dbReference type="PATRIC" id="fig|99287.12.peg.134"/>
<dbReference type="HOGENOM" id="CLU_037404_2_0_6"/>
<dbReference type="OMA" id="AADMMLC"/>
<dbReference type="PhylomeDB" id="Q8ZRU3"/>
<dbReference type="BioCyc" id="SENT99287:STM0128-MONOMER"/>
<dbReference type="UniPathway" id="UPA00219"/>
<dbReference type="Proteomes" id="UP000001014">
    <property type="component" value="Chromosome"/>
</dbReference>
<dbReference type="GO" id="GO:0005886">
    <property type="term" value="C:plasma membrane"/>
    <property type="evidence" value="ECO:0007669"/>
    <property type="project" value="UniProtKB-SubCell"/>
</dbReference>
<dbReference type="GO" id="GO:0051991">
    <property type="term" value="F:UDP-N-acetyl-D-glucosamine:N-acetylmuramoyl-L-alanyl-D-glutamyl-meso-2,6-diaminopimelyl-D-alanyl-D-alanine-diphosphoundecaprenol 4-beta-N-acetylglucosaminlytransferase activity"/>
    <property type="evidence" value="ECO:0007669"/>
    <property type="project" value="RHEA"/>
</dbReference>
<dbReference type="GO" id="GO:0050511">
    <property type="term" value="F:undecaprenyldiphospho-muramoylpentapeptide beta-N-acetylglucosaminyltransferase activity"/>
    <property type="evidence" value="ECO:0000318"/>
    <property type="project" value="GO_Central"/>
</dbReference>
<dbReference type="GO" id="GO:0005975">
    <property type="term" value="P:carbohydrate metabolic process"/>
    <property type="evidence" value="ECO:0007669"/>
    <property type="project" value="InterPro"/>
</dbReference>
<dbReference type="GO" id="GO:0051301">
    <property type="term" value="P:cell division"/>
    <property type="evidence" value="ECO:0007669"/>
    <property type="project" value="UniProtKB-KW"/>
</dbReference>
<dbReference type="GO" id="GO:0071555">
    <property type="term" value="P:cell wall organization"/>
    <property type="evidence" value="ECO:0007669"/>
    <property type="project" value="UniProtKB-KW"/>
</dbReference>
<dbReference type="GO" id="GO:0030259">
    <property type="term" value="P:lipid glycosylation"/>
    <property type="evidence" value="ECO:0007669"/>
    <property type="project" value="UniProtKB-UniRule"/>
</dbReference>
<dbReference type="GO" id="GO:0009252">
    <property type="term" value="P:peptidoglycan biosynthetic process"/>
    <property type="evidence" value="ECO:0007669"/>
    <property type="project" value="UniProtKB-UniRule"/>
</dbReference>
<dbReference type="GO" id="GO:0008360">
    <property type="term" value="P:regulation of cell shape"/>
    <property type="evidence" value="ECO:0007669"/>
    <property type="project" value="UniProtKB-KW"/>
</dbReference>
<dbReference type="CDD" id="cd03785">
    <property type="entry name" value="GT28_MurG"/>
    <property type="match status" value="1"/>
</dbReference>
<dbReference type="FunFam" id="3.40.50.2000:FF:000016">
    <property type="entry name" value="UDP-N-acetylglucosamine--N-acetylmuramyl-(pentapeptide) pyrophosphoryl-undecaprenol N-acetylglucosamine transferase"/>
    <property type="match status" value="1"/>
</dbReference>
<dbReference type="FunFam" id="3.40.50.2000:FF:000018">
    <property type="entry name" value="UDP-N-acetylglucosamine--N-acetylmuramyl-(pentapeptide) pyrophosphoryl-undecaprenol N-acetylglucosamine transferase"/>
    <property type="match status" value="1"/>
</dbReference>
<dbReference type="Gene3D" id="3.40.50.2000">
    <property type="entry name" value="Glycogen Phosphorylase B"/>
    <property type="match status" value="2"/>
</dbReference>
<dbReference type="HAMAP" id="MF_00033">
    <property type="entry name" value="MurG"/>
    <property type="match status" value="1"/>
</dbReference>
<dbReference type="InterPro" id="IPR006009">
    <property type="entry name" value="GlcNAc_MurG"/>
</dbReference>
<dbReference type="InterPro" id="IPR007235">
    <property type="entry name" value="Glyco_trans_28_C"/>
</dbReference>
<dbReference type="InterPro" id="IPR004276">
    <property type="entry name" value="GlycoTrans_28_N"/>
</dbReference>
<dbReference type="NCBIfam" id="TIGR01133">
    <property type="entry name" value="murG"/>
    <property type="match status" value="1"/>
</dbReference>
<dbReference type="PANTHER" id="PTHR21015:SF22">
    <property type="entry name" value="GLYCOSYLTRANSFERASE"/>
    <property type="match status" value="1"/>
</dbReference>
<dbReference type="PANTHER" id="PTHR21015">
    <property type="entry name" value="UDP-N-ACETYLGLUCOSAMINE--N-ACETYLMURAMYL-(PENTAPEPTIDE) PYROPHOSPHORYL-UNDECAPRENOL N-ACETYLGLUCOSAMINE TRANSFERASE 1"/>
    <property type="match status" value="1"/>
</dbReference>
<dbReference type="Pfam" id="PF04101">
    <property type="entry name" value="Glyco_tran_28_C"/>
    <property type="match status" value="1"/>
</dbReference>
<dbReference type="Pfam" id="PF03033">
    <property type="entry name" value="Glyco_transf_28"/>
    <property type="match status" value="1"/>
</dbReference>
<dbReference type="SUPFAM" id="SSF53756">
    <property type="entry name" value="UDP-Glycosyltransferase/glycogen phosphorylase"/>
    <property type="match status" value="1"/>
</dbReference>
<reference key="1">
    <citation type="journal article" date="2001" name="Nature">
        <title>Complete genome sequence of Salmonella enterica serovar Typhimurium LT2.</title>
        <authorList>
            <person name="McClelland M."/>
            <person name="Sanderson K.E."/>
            <person name="Spieth J."/>
            <person name="Clifton S.W."/>
            <person name="Latreille P."/>
            <person name="Courtney L."/>
            <person name="Porwollik S."/>
            <person name="Ali J."/>
            <person name="Dante M."/>
            <person name="Du F."/>
            <person name="Hou S."/>
            <person name="Layman D."/>
            <person name="Leonard S."/>
            <person name="Nguyen C."/>
            <person name="Scott K."/>
            <person name="Holmes A."/>
            <person name="Grewal N."/>
            <person name="Mulvaney E."/>
            <person name="Ryan E."/>
            <person name="Sun H."/>
            <person name="Florea L."/>
            <person name="Miller W."/>
            <person name="Stoneking T."/>
            <person name="Nhan M."/>
            <person name="Waterston R."/>
            <person name="Wilson R.K."/>
        </authorList>
    </citation>
    <scope>NUCLEOTIDE SEQUENCE [LARGE SCALE GENOMIC DNA]</scope>
    <source>
        <strain>LT2 / SGSC1412 / ATCC 700720</strain>
    </source>
</reference>
<name>MURG_SALTY</name>
<keyword id="KW-0131">Cell cycle</keyword>
<keyword id="KW-0132">Cell division</keyword>
<keyword id="KW-0997">Cell inner membrane</keyword>
<keyword id="KW-1003">Cell membrane</keyword>
<keyword id="KW-0133">Cell shape</keyword>
<keyword id="KW-0961">Cell wall biogenesis/degradation</keyword>
<keyword id="KW-0328">Glycosyltransferase</keyword>
<keyword id="KW-0472">Membrane</keyword>
<keyword id="KW-0573">Peptidoglycan synthesis</keyword>
<keyword id="KW-1185">Reference proteome</keyword>
<keyword id="KW-0808">Transferase</keyword>
<proteinExistence type="inferred from homology"/>
<organism>
    <name type="scientific">Salmonella typhimurium (strain LT2 / SGSC1412 / ATCC 700720)</name>
    <dbReference type="NCBI Taxonomy" id="99287"/>
    <lineage>
        <taxon>Bacteria</taxon>
        <taxon>Pseudomonadati</taxon>
        <taxon>Pseudomonadota</taxon>
        <taxon>Gammaproteobacteria</taxon>
        <taxon>Enterobacterales</taxon>
        <taxon>Enterobacteriaceae</taxon>
        <taxon>Salmonella</taxon>
    </lineage>
</organism>
<gene>
    <name evidence="2" type="primary">murG</name>
    <name type="ordered locus">STM0128</name>
</gene>
<evidence type="ECO:0000250" key="1"/>
<evidence type="ECO:0000255" key="2">
    <source>
        <dbReference type="HAMAP-Rule" id="MF_00033"/>
    </source>
</evidence>
<protein>
    <recommendedName>
        <fullName evidence="2">UDP-N-acetylglucosamine--N-acetylmuramyl-(pentapeptide) pyrophosphoryl-undecaprenol N-acetylglucosamine transferase</fullName>
        <ecNumber evidence="2">2.4.1.227</ecNumber>
    </recommendedName>
    <alternativeName>
        <fullName evidence="2">Undecaprenyl-PP-MurNAc-pentapeptide-UDPGlcNAc GlcNAc transferase</fullName>
    </alternativeName>
</protein>